<organism>
    <name type="scientific">Bartonella henselae (strain ATCC 49882 / DSM 28221 / CCUG 30454 / Houston 1)</name>
    <name type="common">Rochalimaea henselae</name>
    <dbReference type="NCBI Taxonomy" id="283166"/>
    <lineage>
        <taxon>Bacteria</taxon>
        <taxon>Pseudomonadati</taxon>
        <taxon>Pseudomonadota</taxon>
        <taxon>Alphaproteobacteria</taxon>
        <taxon>Hyphomicrobiales</taxon>
        <taxon>Bartonellaceae</taxon>
        <taxon>Bartonella</taxon>
    </lineage>
</organism>
<protein>
    <recommendedName>
        <fullName evidence="1">Protein RecA</fullName>
    </recommendedName>
    <alternativeName>
        <fullName evidence="1">Recombinase A</fullName>
    </alternativeName>
</protein>
<keyword id="KW-0067">ATP-binding</keyword>
<keyword id="KW-0963">Cytoplasm</keyword>
<keyword id="KW-0227">DNA damage</keyword>
<keyword id="KW-0233">DNA recombination</keyword>
<keyword id="KW-0234">DNA repair</keyword>
<keyword id="KW-0238">DNA-binding</keyword>
<keyword id="KW-0547">Nucleotide-binding</keyword>
<keyword id="KW-0742">SOS response</keyword>
<name>RECA_BARHE</name>
<sequence>MDKIKALDAALSQIERSFGKGSIMRLGQKEQVVEIETIPTGSLSLDIALGVGGLPKGRIVEIYGPESSGKTTLALHAIAEAQKNGGVCAFIDAEHALDPIYARKLGVDLENLFISQPDTGEQALEITETLVRSGAVDVLVVDSVAALTPRAEIDGEMGDALPGLQARLMSKALRKLTASIFRSNCMVIFINQIRMKIGVMFGSPETTTGGNALKFYASVRLDIRRIGSIKDRDMIVGNQTRVKVVKNKLAPPFKQVEFDIIYGEGISKLGELIDLGVKVGTVEKSGSWFSYNSQRLGQGRENAKQFLREHPEIATEIETALRQNAGLIAIELLENAGSENTESDEVI</sequence>
<comment type="function">
    <text evidence="1">Can catalyze the hydrolysis of ATP in the presence of single-stranded DNA, the ATP-dependent uptake of single-stranded DNA by duplex DNA, and the ATP-dependent hybridization of homologous single-stranded DNAs. It interacts with LexA causing its activation and leading to its autocatalytic cleavage.</text>
</comment>
<comment type="subcellular location">
    <subcellularLocation>
        <location evidence="1">Cytoplasm</location>
    </subcellularLocation>
</comment>
<comment type="similarity">
    <text evidence="1">Belongs to the RecA family.</text>
</comment>
<reference key="1">
    <citation type="journal article" date="2004" name="Proc. Natl. Acad. Sci. U.S.A.">
        <title>The louse-borne human pathogen Bartonella quintana is a genomic derivative of the zoonotic agent Bartonella henselae.</title>
        <authorList>
            <person name="Alsmark U.C.M."/>
            <person name="Frank A.C."/>
            <person name="Karlberg E.O."/>
            <person name="Legault B.-A."/>
            <person name="Ardell D.H."/>
            <person name="Canbaeck B."/>
            <person name="Eriksson A.-S."/>
            <person name="Naeslund A.K."/>
            <person name="Handley S.A."/>
            <person name="Huvet M."/>
            <person name="La Scola B."/>
            <person name="Holmberg M."/>
            <person name="Andersson S.G.E."/>
        </authorList>
    </citation>
    <scope>NUCLEOTIDE SEQUENCE [LARGE SCALE GENOMIC DNA]</scope>
    <source>
        <strain>ATCC 49882 / DSM 28221 / CCUG 30454 / Houston 1</strain>
    </source>
</reference>
<evidence type="ECO:0000255" key="1">
    <source>
        <dbReference type="HAMAP-Rule" id="MF_00268"/>
    </source>
</evidence>
<gene>
    <name evidence="1" type="primary">recA</name>
    <name type="ordered locus">BH10230</name>
</gene>
<dbReference type="EMBL" id="BX897699">
    <property type="protein sequence ID" value="CAF27814.1"/>
    <property type="molecule type" value="Genomic_DNA"/>
</dbReference>
<dbReference type="RefSeq" id="WP_011180887.1">
    <property type="nucleotide sequence ID" value="NZ_LRIJ02000001.1"/>
</dbReference>
<dbReference type="SMR" id="Q6G2Z3"/>
<dbReference type="PaxDb" id="283166-BH10230"/>
<dbReference type="EnsemblBacteria" id="CAF27814">
    <property type="protein sequence ID" value="CAF27814"/>
    <property type="gene ID" value="BH10230"/>
</dbReference>
<dbReference type="GeneID" id="92985291"/>
<dbReference type="KEGG" id="bhe:BH10230"/>
<dbReference type="eggNOG" id="COG0468">
    <property type="taxonomic scope" value="Bacteria"/>
</dbReference>
<dbReference type="OrthoDB" id="9776733at2"/>
<dbReference type="Proteomes" id="UP000000421">
    <property type="component" value="Chromosome"/>
</dbReference>
<dbReference type="GO" id="GO:0005829">
    <property type="term" value="C:cytosol"/>
    <property type="evidence" value="ECO:0007669"/>
    <property type="project" value="TreeGrafter"/>
</dbReference>
<dbReference type="GO" id="GO:0005524">
    <property type="term" value="F:ATP binding"/>
    <property type="evidence" value="ECO:0007669"/>
    <property type="project" value="UniProtKB-UniRule"/>
</dbReference>
<dbReference type="GO" id="GO:0016887">
    <property type="term" value="F:ATP hydrolysis activity"/>
    <property type="evidence" value="ECO:0007669"/>
    <property type="project" value="InterPro"/>
</dbReference>
<dbReference type="GO" id="GO:0140664">
    <property type="term" value="F:ATP-dependent DNA damage sensor activity"/>
    <property type="evidence" value="ECO:0007669"/>
    <property type="project" value="InterPro"/>
</dbReference>
<dbReference type="GO" id="GO:0003684">
    <property type="term" value="F:damaged DNA binding"/>
    <property type="evidence" value="ECO:0007669"/>
    <property type="project" value="UniProtKB-UniRule"/>
</dbReference>
<dbReference type="GO" id="GO:0003697">
    <property type="term" value="F:single-stranded DNA binding"/>
    <property type="evidence" value="ECO:0007669"/>
    <property type="project" value="UniProtKB-UniRule"/>
</dbReference>
<dbReference type="GO" id="GO:0006310">
    <property type="term" value="P:DNA recombination"/>
    <property type="evidence" value="ECO:0007669"/>
    <property type="project" value="UniProtKB-UniRule"/>
</dbReference>
<dbReference type="GO" id="GO:0006281">
    <property type="term" value="P:DNA repair"/>
    <property type="evidence" value="ECO:0007669"/>
    <property type="project" value="UniProtKB-UniRule"/>
</dbReference>
<dbReference type="GO" id="GO:0009432">
    <property type="term" value="P:SOS response"/>
    <property type="evidence" value="ECO:0007669"/>
    <property type="project" value="UniProtKB-UniRule"/>
</dbReference>
<dbReference type="CDD" id="cd00983">
    <property type="entry name" value="RecA"/>
    <property type="match status" value="1"/>
</dbReference>
<dbReference type="FunFam" id="3.40.50.300:FF:000087">
    <property type="entry name" value="Recombinase RecA"/>
    <property type="match status" value="1"/>
</dbReference>
<dbReference type="Gene3D" id="3.40.50.300">
    <property type="entry name" value="P-loop containing nucleotide triphosphate hydrolases"/>
    <property type="match status" value="1"/>
</dbReference>
<dbReference type="HAMAP" id="MF_00268">
    <property type="entry name" value="RecA"/>
    <property type="match status" value="1"/>
</dbReference>
<dbReference type="InterPro" id="IPR003593">
    <property type="entry name" value="AAA+_ATPase"/>
</dbReference>
<dbReference type="InterPro" id="IPR013765">
    <property type="entry name" value="DNA_recomb/repair_RecA"/>
</dbReference>
<dbReference type="InterPro" id="IPR020584">
    <property type="entry name" value="DNA_recomb/repair_RecA_CS"/>
</dbReference>
<dbReference type="InterPro" id="IPR027417">
    <property type="entry name" value="P-loop_NTPase"/>
</dbReference>
<dbReference type="InterPro" id="IPR049261">
    <property type="entry name" value="RecA-like_C"/>
</dbReference>
<dbReference type="InterPro" id="IPR049428">
    <property type="entry name" value="RecA-like_N"/>
</dbReference>
<dbReference type="InterPro" id="IPR020588">
    <property type="entry name" value="RecA_ATP-bd"/>
</dbReference>
<dbReference type="InterPro" id="IPR023400">
    <property type="entry name" value="RecA_C_sf"/>
</dbReference>
<dbReference type="InterPro" id="IPR020587">
    <property type="entry name" value="RecA_monomer-monomer_interface"/>
</dbReference>
<dbReference type="NCBIfam" id="TIGR02012">
    <property type="entry name" value="tigrfam_recA"/>
    <property type="match status" value="1"/>
</dbReference>
<dbReference type="PANTHER" id="PTHR45900:SF1">
    <property type="entry name" value="MITOCHONDRIAL DNA REPAIR PROTEIN RECA HOMOLOG-RELATED"/>
    <property type="match status" value="1"/>
</dbReference>
<dbReference type="PANTHER" id="PTHR45900">
    <property type="entry name" value="RECA"/>
    <property type="match status" value="1"/>
</dbReference>
<dbReference type="Pfam" id="PF00154">
    <property type="entry name" value="RecA"/>
    <property type="match status" value="1"/>
</dbReference>
<dbReference type="Pfam" id="PF21096">
    <property type="entry name" value="RecA_C"/>
    <property type="match status" value="1"/>
</dbReference>
<dbReference type="PRINTS" id="PR00142">
    <property type="entry name" value="RECA"/>
</dbReference>
<dbReference type="SMART" id="SM00382">
    <property type="entry name" value="AAA"/>
    <property type="match status" value="1"/>
</dbReference>
<dbReference type="SUPFAM" id="SSF52540">
    <property type="entry name" value="P-loop containing nucleoside triphosphate hydrolases"/>
    <property type="match status" value="1"/>
</dbReference>
<dbReference type="SUPFAM" id="SSF54752">
    <property type="entry name" value="RecA protein, C-terminal domain"/>
    <property type="match status" value="1"/>
</dbReference>
<dbReference type="PROSITE" id="PS00321">
    <property type="entry name" value="RECA_1"/>
    <property type="match status" value="1"/>
</dbReference>
<dbReference type="PROSITE" id="PS50162">
    <property type="entry name" value="RECA_2"/>
    <property type="match status" value="1"/>
</dbReference>
<dbReference type="PROSITE" id="PS50163">
    <property type="entry name" value="RECA_3"/>
    <property type="match status" value="1"/>
</dbReference>
<proteinExistence type="inferred from homology"/>
<feature type="chain" id="PRO_0000122658" description="Protein RecA">
    <location>
        <begin position="1"/>
        <end position="347"/>
    </location>
</feature>
<feature type="binding site" evidence="1">
    <location>
        <begin position="64"/>
        <end position="71"/>
    </location>
    <ligand>
        <name>ATP</name>
        <dbReference type="ChEBI" id="CHEBI:30616"/>
    </ligand>
</feature>
<accession>Q6G2Z3</accession>